<protein>
    <recommendedName>
        <fullName>RNA2 polyprotein</fullName>
    </recommendedName>
    <alternativeName>
        <fullName>P2</fullName>
    </alternativeName>
    <component>
        <recommendedName>
            <fullName>Protein 2A</fullName>
            <shortName>P2A</shortName>
        </recommendedName>
    </component>
    <component>
        <recommendedName>
            <fullName>Movement protein</fullName>
        </recommendedName>
        <alternativeName>
            <fullName>2B-MP</fullName>
        </alternativeName>
    </component>
    <component>
        <recommendedName>
            <fullName>Coat protein</fullName>
        </recommendedName>
        <alternativeName>
            <fullName>2C-CP</fullName>
        </alternativeName>
    </component>
</protein>
<feature type="chain" id="PRO_0000037109" description="Protein 2A" evidence="1">
    <location>
        <begin position="1"/>
        <end status="unknown"/>
    </location>
</feature>
<feature type="chain" id="PRO_0000037110" description="Movement protein">
    <location>
        <begin status="unknown"/>
        <end position="593"/>
    </location>
</feature>
<feature type="chain" id="PRO_0000037111" description="Coat protein">
    <location>
        <begin position="594"/>
        <end position="1107"/>
    </location>
</feature>
<feature type="region of interest" description="Disordered" evidence="2">
    <location>
        <begin position="553"/>
        <end position="584"/>
    </location>
</feature>
<feature type="compositionally biased region" description="Polar residues" evidence="2">
    <location>
        <begin position="572"/>
        <end position="581"/>
    </location>
</feature>
<feature type="sequence variant">
    <original>A</original>
    <variation>T</variation>
    <location>
        <position position="1032"/>
    </location>
</feature>
<reference key="1">
    <citation type="journal article" date="1992" name="J. Gen. Virol.">
        <title>The nucleotide sequence of RNA-2 of raspberry ringspot nepovirus.</title>
        <authorList>
            <person name="Blok V.C."/>
            <person name="Wardell J."/>
            <person name="Jolly C.A."/>
            <person name="Manoukian A."/>
            <person name="Robinson D.J."/>
            <person name="Edwards M.L."/>
            <person name="Mayo M.A."/>
        </authorList>
    </citation>
    <scope>NUCLEOTIDE SEQUENCE [GENOMIC RNA]</scope>
    <scope>PROTEIN SEQUENCE OF 594-608</scope>
    <scope>PROTEOLYTIC PROCESSING OF POLYPROTEIN</scope>
</reference>
<organism>
    <name type="scientific">Raspberry ringspot virus (strain S)</name>
    <name type="common">RpRSV</name>
    <dbReference type="NCBI Taxonomy" id="36399"/>
    <lineage>
        <taxon>Viruses</taxon>
        <taxon>Riboviria</taxon>
        <taxon>Orthornavirae</taxon>
        <taxon>Pisuviricota</taxon>
        <taxon>Pisoniviricetes</taxon>
        <taxon>Picornavirales</taxon>
        <taxon>Secoviridae</taxon>
        <taxon>Comovirinae</taxon>
        <taxon>Nepovirus</taxon>
        <taxon>Nepovirus rubi</taxon>
    </lineage>
</organism>
<accession>P36324</accession>
<evidence type="ECO:0000250" key="1"/>
<evidence type="ECO:0000256" key="2">
    <source>
        <dbReference type="SAM" id="MobiDB-lite"/>
    </source>
</evidence>
<evidence type="ECO:0000305" key="3"/>
<proteinExistence type="evidence at protein level"/>
<dbReference type="EMBL" id="S46011">
    <property type="protein sequence ID" value="AAB23551.1"/>
    <property type="molecule type" value="Genomic_RNA"/>
</dbReference>
<dbReference type="PIR" id="JQ1658">
    <property type="entry name" value="JQ1658"/>
</dbReference>
<dbReference type="SMR" id="P36324"/>
<dbReference type="GO" id="GO:0030430">
    <property type="term" value="C:host cell cytoplasm"/>
    <property type="evidence" value="ECO:0007669"/>
    <property type="project" value="UniProtKB-SubCell"/>
</dbReference>
<dbReference type="GO" id="GO:0042025">
    <property type="term" value="C:host cell nucleus"/>
    <property type="evidence" value="ECO:0007669"/>
    <property type="project" value="UniProtKB-SubCell"/>
</dbReference>
<dbReference type="GO" id="GO:0044219">
    <property type="term" value="C:host cell plasmodesma"/>
    <property type="evidence" value="ECO:0007669"/>
    <property type="project" value="UniProtKB-SubCell"/>
</dbReference>
<dbReference type="GO" id="GO:0019028">
    <property type="term" value="C:viral capsid"/>
    <property type="evidence" value="ECO:0007669"/>
    <property type="project" value="UniProtKB-KW"/>
</dbReference>
<dbReference type="GO" id="GO:0005198">
    <property type="term" value="F:structural molecule activity"/>
    <property type="evidence" value="ECO:0007669"/>
    <property type="project" value="InterPro"/>
</dbReference>
<dbReference type="GO" id="GO:0046740">
    <property type="term" value="P:transport of virus in host, cell to cell"/>
    <property type="evidence" value="ECO:0007669"/>
    <property type="project" value="UniProtKB-KW"/>
</dbReference>
<dbReference type="Gene3D" id="2.60.120.20">
    <property type="match status" value="2"/>
</dbReference>
<dbReference type="InterPro" id="IPR005054">
    <property type="entry name" value="Nepo_coat"/>
</dbReference>
<dbReference type="InterPro" id="IPR005305">
    <property type="entry name" value="Nepo_coat_C"/>
</dbReference>
<dbReference type="InterPro" id="IPR005306">
    <property type="entry name" value="Nepo_coat_N"/>
</dbReference>
<dbReference type="InterPro" id="IPR029053">
    <property type="entry name" value="Viral_coat"/>
</dbReference>
<dbReference type="Pfam" id="PF03391">
    <property type="entry name" value="Nepo_coat"/>
    <property type="match status" value="1"/>
</dbReference>
<dbReference type="Pfam" id="PF03688">
    <property type="entry name" value="Nepo_coat_C"/>
    <property type="match status" value="1"/>
</dbReference>
<dbReference type="Pfam" id="PF03689">
    <property type="entry name" value="Nepo_coat_N"/>
    <property type="match status" value="1"/>
</dbReference>
<dbReference type="SUPFAM" id="SSF88633">
    <property type="entry name" value="Positive stranded ssRNA viruses"/>
    <property type="match status" value="3"/>
</dbReference>
<organismHost>
    <name type="scientific">Fragaria vesca</name>
    <name type="common">Woodland strawberry</name>
    <name type="synonym">Potentilla vesca</name>
    <dbReference type="NCBI Taxonomy" id="57918"/>
</organismHost>
<organismHost>
    <name type="scientific">Narcissus pseudonarcissus</name>
    <name type="common">Daffodil</name>
    <dbReference type="NCBI Taxonomy" id="39639"/>
</organismHost>
<organismHost>
    <name type="scientific">Rubus idaeus</name>
    <name type="common">Raspberry</name>
    <dbReference type="NCBI Taxonomy" id="32247"/>
</organismHost>
<name>POL2_RRVS</name>
<keyword id="KW-0167">Capsid protein</keyword>
<keyword id="KW-0903">Direct protein sequencing</keyword>
<keyword id="KW-1031">Host cell junction</keyword>
<keyword id="KW-1035">Host cytoplasm</keyword>
<keyword id="KW-1048">Host nucleus</keyword>
<keyword id="KW-0813">Transport</keyword>
<keyword id="KW-0916">Viral movement protein</keyword>
<keyword id="KW-0946">Virion</keyword>
<sequence>MSQFWGEFPEKVIQTFQHLQVALIGDIKKCALSSPLFPELSKLDAHSQHHLLASFELPRFGGVTPGVMEQLRDAESELAEAKQRLLRERLHAVANRQNIPYLGDCMYYDAPGISQEELLQAAFLEAPTPAWEHERIRPLWPKDEWFRDARQGPYLEDYGNIPLGDLDTLCLAFDALVEEHWMPIYLLISTFSMFQQYGTQPLLLECAQSAGSLIPACMMTDHHLEPTGDRQADKEARQDYADSQDSIQSMGDFWKEFYTKDSGKKIPDSHKSRLANDPNKVGFTKSALFHKQPLSHSLAQTWANFRGTQDKADLVKVTMDMNIEKYTVRLPDAVRTTAGPLYIEWINLPRMSENSARKLAEVGWNNADICGVDLAVKSHIAVGTPVRVIISLVDGACSDMPTATMCAFEVNLASQNNRSLNLPLLSLPFSRLLADLHDFQNRVKIACQFRDPEGFNVGTPMLSFSSLEFSELKQTAFERNSLLRDSWSEIEKRACHGGGRCVASQGIVQTWEKEVNPPLKEYAPLVLPPVPQPKRNFIDQQTGEVVQSFMQKSRSMRFKSPSDLWSRPSVDGGSTSTQPPSKGSLRCENVPGCAYEVDPLHLLYYESVDVPKDTLAGTLLARIDVRAKAAIFDSAVWRQWVRDGCLKPKIKMRITAATSCFSGIVLGACFDAYRRIPAATKTGITASLVTGLPNTVWATRDTSEVEWDIDLAAVCGHTFFALEDTFGYMDFLIYVLRGNEITAVADWSIYVSFHVDWTQESMLATLIPTFVWPPKPTDISLLKEVWGPYRFTLDGTEAKESFAIMPGTAILHGQQIVRTFPRVVAAHFRSWTGKVRMSIQEVSSIFLTGTYMVGVSWNATADLADIVTRKHWIVKSNEIFEVDLYCPYGENPTFTGQANGKPFIIVHKLGGIVGPKDSVGTFGFMIHIHGLTGVYKNPTLHSGDRSVGSAWFRINNIADDNLVFNIPGRIEDIIAAAGKYDVTNYVNPTSLLFSVTGLHGGIIRLHITWCPNTTLGESKGTLKYMQYLYHTATENFFGDQATRGIIDQDGFTIDIACGDFFGATRVGLPGEVERLGIYSSNAKSIAEIRVSFEVLSMNFYGSTIKVT</sequence>
<comment type="function">
    <molecule>Protein 2A</molecule>
    <text evidence="1">Implicated in RNA2 replication. Could also be required for nematode transmission of the virus (By similarity).</text>
</comment>
<comment type="function">
    <molecule>Movement protein</molecule>
    <text evidence="1">Transports viral genome to neighboring plant cells directly through plasmosdesmata, without any budding. The movement protein allows efficient cell to cell propagation, by bypassing the host cell wall barrier. Acts by forming a tubular structure at the host plasmodesmata, enlarging it enough to allow free passage of virion capsids (By similarity).</text>
</comment>
<comment type="subcellular location">
    <subcellularLocation>
        <location>Host cell junction</location>
        <location>Host plasmodesma</location>
    </subcellularLocation>
    <text evidence="1">Assembles in tubules that are embedded within modified plasmodesmata (By similarity). Movement proteins are targeted preferentially to calreticulin-labeled foci within the youngest cross walls, where they assemble into tubules. During cell division, they colocalize in the cell plate with KNOLLE, a cytokinesis-specific syntaxin (By similarity).</text>
</comment>
<comment type="subcellular location">
    <molecule>Protein 2A</molecule>
    <subcellularLocation>
        <location evidence="1">Host cytoplasm</location>
    </subcellularLocation>
    <subcellularLocation>
        <location evidence="1">Host nucleus</location>
    </subcellularLocation>
    <text evidence="1">Cytoplasmic early in infection. Later in infection, it becomes progressively concentrated around the nucleus, where it forms large aggregates (By similarity).</text>
</comment>
<comment type="subcellular location">
    <molecule>Coat protein</molecule>
    <subcellularLocation>
        <location evidence="3">Virion</location>
    </subcellularLocation>
</comment>
<comment type="PTM">
    <text evidence="1">Specific enzymatic cleavages in vivo by the P1 encoded 3C-like protease yield mature proteins.</text>
</comment>
<comment type="miscellaneous">
    <text>Virions are comprised of 60 copies of the coat protein.</text>
</comment>
<comment type="similarity">
    <text evidence="3">Belongs to the nepoviruses RNA2 polyprotein family.</text>
</comment>